<feature type="initiator methionine" description="Removed" evidence="1">
    <location>
        <position position="1"/>
    </location>
</feature>
<feature type="chain" id="PRO_0000221371" description="Histone H3">
    <location>
        <begin position="2"/>
        <end position="136"/>
    </location>
</feature>
<feature type="region of interest" description="Disordered" evidence="2">
    <location>
        <begin position="1"/>
        <end position="43"/>
    </location>
</feature>
<feature type="modified residue" description="N6,N6,N6-trimethyllysine; alternate" evidence="1">
    <location>
        <position position="5"/>
    </location>
</feature>
<feature type="modified residue" description="N6,N6-dimethyllysine; alternate" evidence="1">
    <location>
        <position position="5"/>
    </location>
</feature>
<feature type="modified residue" description="N6-methyllysine; alternate" evidence="1">
    <location>
        <position position="5"/>
    </location>
</feature>
<feature type="modified residue" description="N6-acetyllysine; alternate" evidence="1">
    <location>
        <position position="10"/>
    </location>
</feature>
<feature type="modified residue" description="N6-methyllysine; alternate" evidence="1">
    <location>
        <position position="10"/>
    </location>
</feature>
<feature type="modified residue" description="Phosphoserine" evidence="1">
    <location>
        <position position="11"/>
    </location>
</feature>
<feature type="modified residue" description="N6,N6-dimethyllysine; alternate" evidence="1">
    <location>
        <position position="15"/>
    </location>
</feature>
<feature type="modified residue" description="N6-acetyllysine; alternate" evidence="1">
    <location>
        <position position="15"/>
    </location>
</feature>
<feature type="modified residue" description="N6-acetyllysine; alternate" evidence="1">
    <location>
        <position position="19"/>
    </location>
</feature>
<feature type="modified residue" description="N6-methyllysine; alternate" evidence="1">
    <location>
        <position position="19"/>
    </location>
</feature>
<feature type="modified residue" description="N6-acetyllysine; alternate" evidence="1">
    <location>
        <position position="24"/>
    </location>
</feature>
<feature type="modified residue" description="N6-methyllysine; alternate" evidence="1">
    <location>
        <position position="24"/>
    </location>
</feature>
<feature type="modified residue" description="N6,N6,N6-trimethyllysine; alternate" evidence="1">
    <location>
        <position position="28"/>
    </location>
</feature>
<feature type="modified residue" description="N6,N6-dimethyllysine; alternate" evidence="1">
    <location>
        <position position="28"/>
    </location>
</feature>
<feature type="modified residue" description="N6-acetyllysine; alternate" evidence="1">
    <location>
        <position position="28"/>
    </location>
</feature>
<feature type="modified residue" description="N6-methyllysine; alternate" evidence="1">
    <location>
        <position position="28"/>
    </location>
</feature>
<feature type="modified residue" description="N6,N6,N6-trimethyllysine; alternate" evidence="1">
    <location>
        <position position="37"/>
    </location>
</feature>
<feature type="modified residue" description="N6,N6-dimethyllysine; alternate" evidence="1">
    <location>
        <position position="37"/>
    </location>
</feature>
<feature type="modified residue" description="N6-acetyllysine; alternate" evidence="1">
    <location>
        <position position="37"/>
    </location>
</feature>
<feature type="modified residue" description="N6-methyllysine; alternate" evidence="1">
    <location>
        <position position="37"/>
    </location>
</feature>
<feature type="modified residue" description="N6-acetyllysine" evidence="1">
    <location>
        <position position="57"/>
    </location>
</feature>
<feature type="modified residue" description="N6-acetyllysine" evidence="1">
    <location>
        <position position="65"/>
    </location>
</feature>
<feature type="modified residue" description="N6,N6,N6-trimethyllysine; alternate" evidence="1">
    <location>
        <position position="80"/>
    </location>
</feature>
<feature type="modified residue" description="N6,N6-dimethyllysine; alternate" evidence="1">
    <location>
        <position position="80"/>
    </location>
</feature>
<feature type="modified residue" description="N6-methyllysine; alternate" evidence="1">
    <location>
        <position position="80"/>
    </location>
</feature>
<dbReference type="EMBL" id="AF296170">
    <property type="protein sequence ID" value="AAG30425.1"/>
    <property type="molecule type" value="Genomic_DNA"/>
</dbReference>
<dbReference type="SMR" id="P61836"/>
<dbReference type="GO" id="GO:0000786">
    <property type="term" value="C:nucleosome"/>
    <property type="evidence" value="ECO:0007669"/>
    <property type="project" value="UniProtKB-KW"/>
</dbReference>
<dbReference type="GO" id="GO:0005634">
    <property type="term" value="C:nucleus"/>
    <property type="evidence" value="ECO:0007669"/>
    <property type="project" value="UniProtKB-SubCell"/>
</dbReference>
<dbReference type="GO" id="GO:0003677">
    <property type="term" value="F:DNA binding"/>
    <property type="evidence" value="ECO:0007669"/>
    <property type="project" value="UniProtKB-KW"/>
</dbReference>
<dbReference type="GO" id="GO:0046982">
    <property type="term" value="F:protein heterodimerization activity"/>
    <property type="evidence" value="ECO:0007669"/>
    <property type="project" value="InterPro"/>
</dbReference>
<dbReference type="GO" id="GO:0030527">
    <property type="term" value="F:structural constituent of chromatin"/>
    <property type="evidence" value="ECO:0007669"/>
    <property type="project" value="InterPro"/>
</dbReference>
<dbReference type="CDD" id="cd22911">
    <property type="entry name" value="HFD_H3"/>
    <property type="match status" value="1"/>
</dbReference>
<dbReference type="FunFam" id="1.10.20.10:FF:000010">
    <property type="entry name" value="Histone H3"/>
    <property type="match status" value="1"/>
</dbReference>
<dbReference type="Gene3D" id="1.10.20.10">
    <property type="entry name" value="Histone, subunit A"/>
    <property type="match status" value="1"/>
</dbReference>
<dbReference type="InterPro" id="IPR009072">
    <property type="entry name" value="Histone-fold"/>
</dbReference>
<dbReference type="InterPro" id="IPR007125">
    <property type="entry name" value="Histone_H2A/H2B/H3"/>
</dbReference>
<dbReference type="InterPro" id="IPR000164">
    <property type="entry name" value="Histone_H3/CENP-A"/>
</dbReference>
<dbReference type="PANTHER" id="PTHR11426">
    <property type="entry name" value="HISTONE H3"/>
    <property type="match status" value="1"/>
</dbReference>
<dbReference type="Pfam" id="PF00125">
    <property type="entry name" value="Histone"/>
    <property type="match status" value="1"/>
</dbReference>
<dbReference type="PRINTS" id="PR00622">
    <property type="entry name" value="HISTONEH3"/>
</dbReference>
<dbReference type="SMART" id="SM00428">
    <property type="entry name" value="H3"/>
    <property type="match status" value="1"/>
</dbReference>
<dbReference type="SUPFAM" id="SSF47113">
    <property type="entry name" value="Histone-fold"/>
    <property type="match status" value="1"/>
</dbReference>
<dbReference type="PROSITE" id="PS00322">
    <property type="entry name" value="HISTONE_H3_1"/>
    <property type="match status" value="1"/>
</dbReference>
<dbReference type="PROSITE" id="PS00959">
    <property type="entry name" value="HISTONE_H3_2"/>
    <property type="match status" value="1"/>
</dbReference>
<comment type="function">
    <text>Core component of nucleosome. Nucleosomes wrap and compact DNA into chromatin, limiting DNA accessibility to the cellular machineries which require DNA as a template. Histones thereby play a central role in transcription regulation, DNA repair, DNA replication and chromosomal stability. DNA accessibility is regulated via a complex set of post-translational modifications of histones, also called histone code, and nucleosome remodeling.</text>
</comment>
<comment type="subunit">
    <text>The nucleosome is a histone octamer containing two molecules each of H2A, H2B, H3 and H4 assembled in one H3-H4 heterotetramer and two H2A-H2B heterodimers. The octamer wraps approximately 147 bp of DNA.</text>
</comment>
<comment type="subcellular location">
    <subcellularLocation>
        <location evidence="1">Nucleus</location>
    </subcellularLocation>
    <subcellularLocation>
        <location evidence="1">Chromosome</location>
    </subcellularLocation>
</comment>
<comment type="PTM">
    <text evidence="1">Phosphorylated to form H3S10ph. H3S10ph promotes subsequent H3K14ac formation and is required for transcriptional activation through TBP recruitment to the promoters (By similarity).</text>
</comment>
<comment type="PTM">
    <text evidence="1">Mono-, di- and trimethylated by the COMPASS complex to form H3K4me1/2/3. H3K4me activates gene expression by regulating transcription elongation and plays a role in telomere length maintenance. H3K4me enrichment correlates with transcription levels, and occurs in a 5' to 3' gradient with H3K4me3 enrichment at the 5'-end of genes, shifting to H3K4me2 and then H3K4me1. Methylated by SET2 to form H3K36me. H3K36me represses gene expression. Methylated by DOT1 to form H3K79me. H3K79me is required for association of SIR proteins with telomeric regions and for telomeric silencing. The COMPASS-mediated formation of H3K4me2/3 and the DOT1-mediated formation of H3K79me require H2BK123ub1 (By similarity).</text>
</comment>
<comment type="PTM">
    <text evidence="1">Acetylation of histone H3 leads to transcriptional activation. H3K14ac formation by GCN5 is promoted by H3S10ph. H3K14ac can also be formed by ESA1. H3K56ac formation occurs predominantly in newly synthesized H3 molecules during G1, S and G2/M of the cell cycle and may be involved in DNA repair (By similarity).</text>
</comment>
<comment type="similarity">
    <text evidence="3">Belongs to the histone H3 family.</text>
</comment>
<comment type="caution">
    <text evidence="3">To ensure consistency between histone entries, we follow the 'Brno' nomenclature for histone modifications, with positions referring to those used in the literature for the 'closest' model organism. Due to slight variations in histone sequences between organisms and to the presence of initiator methionine in UniProtKB/Swiss-Prot sequences, the actual positions of modified amino acids in the sequence generally differ. In this entry the following conventions are used: H3K4me1/2/3 = mono-, di- and trimethylated Lys-5; H3K9ac = acetylated Lys-10; H3K9me1 = monomethylated Lys-10; H3S10ph = phosphorylated Ser-11; H3K14ac = acetylated Lys-15; H3K14me2 = dimethylated Lys-15; H3K18ac = acetylated Lys-19; H3K18me1 = monomethylated Lys-19; H3K23ac = acetylated Lys-24; H3K23me1 = monomethylated Lys-24; H3K27ac = acetylated Lys-28; H3K27me1/2/3 = mono-, di- and trimethylated Lys-28; H3K36ac = acetylated Lys-37; H3K36me1/2/3 = mono-, di- and trimethylated Lys-37; H3K56ac = acetylated Lys-57; H3K64ac = acetylated Lys-65; H3K79me1/2/3 = mono-, di- and trimethylated Lys-80.</text>
</comment>
<organism>
    <name type="scientific">Zygosaccharomyces bailii</name>
    <dbReference type="NCBI Taxonomy" id="4954"/>
    <lineage>
        <taxon>Eukaryota</taxon>
        <taxon>Fungi</taxon>
        <taxon>Dikarya</taxon>
        <taxon>Ascomycota</taxon>
        <taxon>Saccharomycotina</taxon>
        <taxon>Saccharomycetes</taxon>
        <taxon>Saccharomycetales</taxon>
        <taxon>Saccharomycetaceae</taxon>
        <taxon>Zygosaccharomyces</taxon>
    </lineage>
</organism>
<proteinExistence type="inferred from homology"/>
<reference key="1">
    <citation type="journal article" date="2001" name="Yeast">
        <title>Targeted gene deletion in Zygosaccharomyces bailii.</title>
        <authorList>
            <person name="Mollapour M."/>
            <person name="Piper P.W."/>
        </authorList>
    </citation>
    <scope>NUCLEOTIDE SEQUENCE [GENOMIC DNA]</scope>
    <source>
        <strain>CBS 685 / NCYC 563 / NRRL Y-12949</strain>
    </source>
</reference>
<name>H3_ZYGBA</name>
<evidence type="ECO:0000250" key="1"/>
<evidence type="ECO:0000256" key="2">
    <source>
        <dbReference type="SAM" id="MobiDB-lite"/>
    </source>
</evidence>
<evidence type="ECO:0000305" key="3"/>
<gene>
    <name type="primary">HHT1</name>
</gene>
<accession>P61836</accession>
<keyword id="KW-0007">Acetylation</keyword>
<keyword id="KW-0158">Chromosome</keyword>
<keyword id="KW-0238">DNA-binding</keyword>
<keyword id="KW-0488">Methylation</keyword>
<keyword id="KW-0544">Nucleosome core</keyword>
<keyword id="KW-0539">Nucleus</keyword>
<keyword id="KW-0597">Phosphoprotein</keyword>
<protein>
    <recommendedName>
        <fullName>Histone H3</fullName>
    </recommendedName>
</protein>
<sequence length="136" mass="15356">MARTKQTARKSTGGKAPRKQLASKAARKSAPSTGGVKKPHRYKPGTVALREIRRFQKSTELLIRKLPFQRLVREIAQDFKTDLRFQSSAIGALQESVEAYLVSLFEDTNLAAIHAKRVTIQKKDIKLARRLRGERS</sequence>